<dbReference type="EC" id="1.6.5.2" evidence="2"/>
<dbReference type="EMBL" id="AE014075">
    <property type="protein sequence ID" value="AAN79608.1"/>
    <property type="molecule type" value="Genomic_DNA"/>
</dbReference>
<dbReference type="SMR" id="P0A8G7"/>
<dbReference type="STRING" id="199310.c1140"/>
<dbReference type="KEGG" id="ecc:c1140"/>
<dbReference type="eggNOG" id="COG0655">
    <property type="taxonomic scope" value="Bacteria"/>
</dbReference>
<dbReference type="HOGENOM" id="CLU_051402_0_2_6"/>
<dbReference type="BioCyc" id="ECOL199310:C1140-MONOMER"/>
<dbReference type="Proteomes" id="UP000001410">
    <property type="component" value="Chromosome"/>
</dbReference>
<dbReference type="GO" id="GO:0016020">
    <property type="term" value="C:membrane"/>
    <property type="evidence" value="ECO:0007669"/>
    <property type="project" value="TreeGrafter"/>
</dbReference>
<dbReference type="GO" id="GO:0050660">
    <property type="term" value="F:flavin adenine dinucleotide binding"/>
    <property type="evidence" value="ECO:0007669"/>
    <property type="project" value="UniProtKB-UniRule"/>
</dbReference>
<dbReference type="GO" id="GO:0010181">
    <property type="term" value="F:FMN binding"/>
    <property type="evidence" value="ECO:0007669"/>
    <property type="project" value="InterPro"/>
</dbReference>
<dbReference type="GO" id="GO:0051287">
    <property type="term" value="F:NAD binding"/>
    <property type="evidence" value="ECO:0007669"/>
    <property type="project" value="UniProtKB-UniRule"/>
</dbReference>
<dbReference type="GO" id="GO:0050136">
    <property type="term" value="F:NADH:ubiquinone reductase (non-electrogenic) activity"/>
    <property type="evidence" value="ECO:0007669"/>
    <property type="project" value="RHEA"/>
</dbReference>
<dbReference type="GO" id="GO:0050661">
    <property type="term" value="F:NADP binding"/>
    <property type="evidence" value="ECO:0007669"/>
    <property type="project" value="UniProtKB-UniRule"/>
</dbReference>
<dbReference type="GO" id="GO:0008753">
    <property type="term" value="F:NADPH dehydrogenase (quinone) activity"/>
    <property type="evidence" value="ECO:0007669"/>
    <property type="project" value="RHEA"/>
</dbReference>
<dbReference type="FunFam" id="3.40.50.360:FF:000004">
    <property type="entry name" value="NAD(P)H dehydrogenase (quinone)"/>
    <property type="match status" value="1"/>
</dbReference>
<dbReference type="Gene3D" id="3.40.50.360">
    <property type="match status" value="1"/>
</dbReference>
<dbReference type="HAMAP" id="MF_01017">
    <property type="entry name" value="NQOR"/>
    <property type="match status" value="1"/>
</dbReference>
<dbReference type="InterPro" id="IPR008254">
    <property type="entry name" value="Flavodoxin/NO_synth"/>
</dbReference>
<dbReference type="InterPro" id="IPR029039">
    <property type="entry name" value="Flavoprotein-like_sf"/>
</dbReference>
<dbReference type="InterPro" id="IPR010089">
    <property type="entry name" value="Flavoprotein_WrbA-like"/>
</dbReference>
<dbReference type="InterPro" id="IPR005025">
    <property type="entry name" value="FMN_Rdtase-like_dom"/>
</dbReference>
<dbReference type="InterPro" id="IPR037513">
    <property type="entry name" value="NQO"/>
</dbReference>
<dbReference type="NCBIfam" id="TIGR01755">
    <property type="entry name" value="flav_wrbA"/>
    <property type="match status" value="1"/>
</dbReference>
<dbReference type="NCBIfam" id="NF002999">
    <property type="entry name" value="PRK03767.1"/>
    <property type="match status" value="1"/>
</dbReference>
<dbReference type="PANTHER" id="PTHR30546">
    <property type="entry name" value="FLAVODOXIN-RELATED PROTEIN WRBA-RELATED"/>
    <property type="match status" value="1"/>
</dbReference>
<dbReference type="PANTHER" id="PTHR30546:SF23">
    <property type="entry name" value="FLAVOPROTEIN-LIKE PROTEIN YCP4-RELATED"/>
    <property type="match status" value="1"/>
</dbReference>
<dbReference type="Pfam" id="PF03358">
    <property type="entry name" value="FMN_red"/>
    <property type="match status" value="1"/>
</dbReference>
<dbReference type="SUPFAM" id="SSF52218">
    <property type="entry name" value="Flavoproteins"/>
    <property type="match status" value="1"/>
</dbReference>
<dbReference type="PROSITE" id="PS50902">
    <property type="entry name" value="FLAVODOXIN_LIKE"/>
    <property type="match status" value="1"/>
</dbReference>
<evidence type="ECO:0000250" key="1"/>
<evidence type="ECO:0000255" key="2">
    <source>
        <dbReference type="HAMAP-Rule" id="MF_01017"/>
    </source>
</evidence>
<proteinExistence type="inferred from homology"/>
<gene>
    <name type="ordered locus">c1140</name>
</gene>
<organism>
    <name type="scientific">Escherichia coli O6:H1 (strain CFT073 / ATCC 700928 / UPEC)</name>
    <dbReference type="NCBI Taxonomy" id="199310"/>
    <lineage>
        <taxon>Bacteria</taxon>
        <taxon>Pseudomonadati</taxon>
        <taxon>Pseudomonadota</taxon>
        <taxon>Gammaproteobacteria</taxon>
        <taxon>Enterobacterales</taxon>
        <taxon>Enterobacteriaceae</taxon>
        <taxon>Escherichia</taxon>
    </lineage>
</organism>
<accession>P0A8G7</accession>
<accession>P30849</accession>
<accession>P75890</accession>
<accession>P77543</accession>
<comment type="catalytic activity">
    <reaction evidence="2">
        <text>a quinone + NADH + H(+) = a quinol + NAD(+)</text>
        <dbReference type="Rhea" id="RHEA:46160"/>
        <dbReference type="ChEBI" id="CHEBI:15378"/>
        <dbReference type="ChEBI" id="CHEBI:24646"/>
        <dbReference type="ChEBI" id="CHEBI:57540"/>
        <dbReference type="ChEBI" id="CHEBI:57945"/>
        <dbReference type="ChEBI" id="CHEBI:132124"/>
        <dbReference type="EC" id="1.6.5.2"/>
    </reaction>
</comment>
<comment type="catalytic activity">
    <reaction evidence="2">
        <text>a quinone + NADPH + H(+) = a quinol + NADP(+)</text>
        <dbReference type="Rhea" id="RHEA:46164"/>
        <dbReference type="ChEBI" id="CHEBI:15378"/>
        <dbReference type="ChEBI" id="CHEBI:24646"/>
        <dbReference type="ChEBI" id="CHEBI:57783"/>
        <dbReference type="ChEBI" id="CHEBI:58349"/>
        <dbReference type="ChEBI" id="CHEBI:132124"/>
        <dbReference type="EC" id="1.6.5.2"/>
    </reaction>
</comment>
<comment type="cofactor">
    <cofactor evidence="2">
        <name>FMN</name>
        <dbReference type="ChEBI" id="CHEBI:58210"/>
    </cofactor>
    <text evidence="2">Binds 1 FMN per monomer.</text>
</comment>
<comment type="similarity">
    <text evidence="2">Belongs to the WrbA family.</text>
</comment>
<sequence length="198" mass="20846">MAKVLVLYYSMYGHIETMARAVAEGASKVDGAEVVVKRVPETMPPQLFEKAGGKTQTAPVATPQELADYDAIIFGTPTRFGNMSGQMRTFLDQTGGLWASGALYGKLASVFSSTGTGGGQEQTITSTWTTLAHHGMVIVPIGYAAQELFDVSQVRGGTPYGATTIAGGDGSRQPSQEELSIARYQGEYVAGLAVKLNG</sequence>
<keyword id="KW-0285">Flavoprotein</keyword>
<keyword id="KW-0288">FMN</keyword>
<keyword id="KW-0520">NAD</keyword>
<keyword id="KW-0521">NADP</keyword>
<keyword id="KW-0547">Nucleotide-binding</keyword>
<keyword id="KW-0560">Oxidoreductase</keyword>
<keyword id="KW-1185">Reference proteome</keyword>
<reference key="1">
    <citation type="journal article" date="2002" name="Proc. Natl. Acad. Sci. U.S.A.">
        <title>Extensive mosaic structure revealed by the complete genome sequence of uropathogenic Escherichia coli.</title>
        <authorList>
            <person name="Welch R.A."/>
            <person name="Burland V."/>
            <person name="Plunkett G. III"/>
            <person name="Redford P."/>
            <person name="Roesch P."/>
            <person name="Rasko D."/>
            <person name="Buckles E.L."/>
            <person name="Liou S.-R."/>
            <person name="Boutin A."/>
            <person name="Hackett J."/>
            <person name="Stroud D."/>
            <person name="Mayhew G.F."/>
            <person name="Rose D.J."/>
            <person name="Zhou S."/>
            <person name="Schwartz D.C."/>
            <person name="Perna N.T."/>
            <person name="Mobley H.L.T."/>
            <person name="Donnenberg M.S."/>
            <person name="Blattner F.R."/>
        </authorList>
    </citation>
    <scope>NUCLEOTIDE SEQUENCE [LARGE SCALE GENOMIC DNA]</scope>
    <source>
        <strain>CFT073 / ATCC 700928 / UPEC</strain>
    </source>
</reference>
<name>NQOR_ECOL6</name>
<feature type="initiator methionine" description="Removed" evidence="1">
    <location>
        <position position="1"/>
    </location>
</feature>
<feature type="chain" id="PRO_0000200748" description="NAD(P)H dehydrogenase (quinone)">
    <location>
        <begin position="2"/>
        <end position="198"/>
    </location>
</feature>
<feature type="domain" description="Flavodoxin-like" evidence="2">
    <location>
        <begin position="4"/>
        <end position="189"/>
    </location>
</feature>
<feature type="binding site" evidence="2">
    <location>
        <begin position="10"/>
        <end position="15"/>
    </location>
    <ligand>
        <name>FMN</name>
        <dbReference type="ChEBI" id="CHEBI:58210"/>
    </ligand>
</feature>
<feature type="binding site" evidence="2">
    <location>
        <position position="12"/>
    </location>
    <ligand>
        <name>NAD(+)</name>
        <dbReference type="ChEBI" id="CHEBI:57540"/>
    </ligand>
</feature>
<feature type="binding site" evidence="2">
    <location>
        <begin position="78"/>
        <end position="80"/>
    </location>
    <ligand>
        <name>FMN</name>
        <dbReference type="ChEBI" id="CHEBI:58210"/>
    </ligand>
</feature>
<feature type="binding site" evidence="2">
    <location>
        <position position="98"/>
    </location>
    <ligand>
        <name>substrate</name>
    </ligand>
</feature>
<feature type="binding site" evidence="2">
    <location>
        <begin position="113"/>
        <end position="118"/>
    </location>
    <ligand>
        <name>FMN</name>
        <dbReference type="ChEBI" id="CHEBI:58210"/>
    </ligand>
</feature>
<feature type="binding site" evidence="2">
    <location>
        <position position="133"/>
    </location>
    <ligand>
        <name>FMN</name>
        <dbReference type="ChEBI" id="CHEBI:58210"/>
    </ligand>
</feature>
<protein>
    <recommendedName>
        <fullName evidence="2">NAD(P)H dehydrogenase (quinone)</fullName>
        <ecNumber evidence="2">1.6.5.2</ecNumber>
    </recommendedName>
    <alternativeName>
        <fullName>Flavoprotein WrbA</fullName>
    </alternativeName>
    <alternativeName>
        <fullName evidence="2">NAD(P)H:quinone oxidoreductase</fullName>
        <shortName evidence="2">NQO</shortName>
    </alternativeName>
</protein>